<name>DDL_CUPMC</name>
<evidence type="ECO:0000250" key="1"/>
<evidence type="ECO:0000255" key="2">
    <source>
        <dbReference type="HAMAP-Rule" id="MF_00047"/>
    </source>
</evidence>
<dbReference type="EC" id="6.3.2.4" evidence="2"/>
<dbReference type="EMBL" id="CP000352">
    <property type="protein sequence ID" value="ABF09998.1"/>
    <property type="molecule type" value="Genomic_DNA"/>
</dbReference>
<dbReference type="RefSeq" id="WP_011517618.1">
    <property type="nucleotide sequence ID" value="NC_007973.1"/>
</dbReference>
<dbReference type="SMR" id="Q1LIM8"/>
<dbReference type="STRING" id="266264.Rmet_3126"/>
<dbReference type="KEGG" id="rme:Rmet_3126"/>
<dbReference type="eggNOG" id="COG1181">
    <property type="taxonomic scope" value="Bacteria"/>
</dbReference>
<dbReference type="HOGENOM" id="CLU_039268_1_2_4"/>
<dbReference type="UniPathway" id="UPA00219"/>
<dbReference type="Proteomes" id="UP000002429">
    <property type="component" value="Chromosome"/>
</dbReference>
<dbReference type="GO" id="GO:0005829">
    <property type="term" value="C:cytosol"/>
    <property type="evidence" value="ECO:0007669"/>
    <property type="project" value="TreeGrafter"/>
</dbReference>
<dbReference type="GO" id="GO:0005524">
    <property type="term" value="F:ATP binding"/>
    <property type="evidence" value="ECO:0007669"/>
    <property type="project" value="UniProtKB-KW"/>
</dbReference>
<dbReference type="GO" id="GO:0008716">
    <property type="term" value="F:D-alanine-D-alanine ligase activity"/>
    <property type="evidence" value="ECO:0007669"/>
    <property type="project" value="UniProtKB-UniRule"/>
</dbReference>
<dbReference type="GO" id="GO:0046872">
    <property type="term" value="F:metal ion binding"/>
    <property type="evidence" value="ECO:0007669"/>
    <property type="project" value="UniProtKB-KW"/>
</dbReference>
<dbReference type="GO" id="GO:0071555">
    <property type="term" value="P:cell wall organization"/>
    <property type="evidence" value="ECO:0007669"/>
    <property type="project" value="UniProtKB-KW"/>
</dbReference>
<dbReference type="GO" id="GO:0009252">
    <property type="term" value="P:peptidoglycan biosynthetic process"/>
    <property type="evidence" value="ECO:0007669"/>
    <property type="project" value="UniProtKB-UniRule"/>
</dbReference>
<dbReference type="GO" id="GO:0008360">
    <property type="term" value="P:regulation of cell shape"/>
    <property type="evidence" value="ECO:0007669"/>
    <property type="project" value="UniProtKB-KW"/>
</dbReference>
<dbReference type="FunFam" id="3.30.470.20:FF:000008">
    <property type="entry name" value="D-alanine--D-alanine ligase"/>
    <property type="match status" value="1"/>
</dbReference>
<dbReference type="FunFam" id="3.40.50.20:FF:000013">
    <property type="entry name" value="D-alanine--D-alanine ligase"/>
    <property type="match status" value="1"/>
</dbReference>
<dbReference type="Gene3D" id="3.40.50.20">
    <property type="match status" value="1"/>
</dbReference>
<dbReference type="Gene3D" id="3.30.1490.20">
    <property type="entry name" value="ATP-grasp fold, A domain"/>
    <property type="match status" value="1"/>
</dbReference>
<dbReference type="Gene3D" id="3.30.470.20">
    <property type="entry name" value="ATP-grasp fold, B domain"/>
    <property type="match status" value="1"/>
</dbReference>
<dbReference type="HAMAP" id="MF_00047">
    <property type="entry name" value="Dala_Dala_lig"/>
    <property type="match status" value="1"/>
</dbReference>
<dbReference type="InterPro" id="IPR011761">
    <property type="entry name" value="ATP-grasp"/>
</dbReference>
<dbReference type="InterPro" id="IPR013815">
    <property type="entry name" value="ATP_grasp_subdomain_1"/>
</dbReference>
<dbReference type="InterPro" id="IPR000291">
    <property type="entry name" value="D-Ala_lig_Van_CS"/>
</dbReference>
<dbReference type="InterPro" id="IPR005905">
    <property type="entry name" value="D_ala_D_ala"/>
</dbReference>
<dbReference type="InterPro" id="IPR011095">
    <property type="entry name" value="Dala_Dala_lig_C"/>
</dbReference>
<dbReference type="InterPro" id="IPR011127">
    <property type="entry name" value="Dala_Dala_lig_N"/>
</dbReference>
<dbReference type="InterPro" id="IPR016185">
    <property type="entry name" value="PreATP-grasp_dom_sf"/>
</dbReference>
<dbReference type="NCBIfam" id="TIGR01205">
    <property type="entry name" value="D_ala_D_alaTIGR"/>
    <property type="match status" value="1"/>
</dbReference>
<dbReference type="NCBIfam" id="NF002378">
    <property type="entry name" value="PRK01372.1"/>
    <property type="match status" value="1"/>
</dbReference>
<dbReference type="PANTHER" id="PTHR23132">
    <property type="entry name" value="D-ALANINE--D-ALANINE LIGASE"/>
    <property type="match status" value="1"/>
</dbReference>
<dbReference type="PANTHER" id="PTHR23132:SF23">
    <property type="entry name" value="D-ALANINE--D-ALANINE LIGASE B"/>
    <property type="match status" value="1"/>
</dbReference>
<dbReference type="Pfam" id="PF07478">
    <property type="entry name" value="Dala_Dala_lig_C"/>
    <property type="match status" value="1"/>
</dbReference>
<dbReference type="Pfam" id="PF01820">
    <property type="entry name" value="Dala_Dala_lig_N"/>
    <property type="match status" value="1"/>
</dbReference>
<dbReference type="PIRSF" id="PIRSF039102">
    <property type="entry name" value="Ddl/VanB"/>
    <property type="match status" value="1"/>
</dbReference>
<dbReference type="SUPFAM" id="SSF56059">
    <property type="entry name" value="Glutathione synthetase ATP-binding domain-like"/>
    <property type="match status" value="1"/>
</dbReference>
<dbReference type="SUPFAM" id="SSF52440">
    <property type="entry name" value="PreATP-grasp domain"/>
    <property type="match status" value="1"/>
</dbReference>
<dbReference type="PROSITE" id="PS50975">
    <property type="entry name" value="ATP_GRASP"/>
    <property type="match status" value="1"/>
</dbReference>
<dbReference type="PROSITE" id="PS00843">
    <property type="entry name" value="DALA_DALA_LIGASE_1"/>
    <property type="match status" value="1"/>
</dbReference>
<dbReference type="PROSITE" id="PS00844">
    <property type="entry name" value="DALA_DALA_LIGASE_2"/>
    <property type="match status" value="1"/>
</dbReference>
<reference key="1">
    <citation type="journal article" date="2010" name="PLoS ONE">
        <title>The complete genome sequence of Cupriavidus metallidurans strain CH34, a master survivalist in harsh and anthropogenic environments.</title>
        <authorList>
            <person name="Janssen P.J."/>
            <person name="Van Houdt R."/>
            <person name="Moors H."/>
            <person name="Monsieurs P."/>
            <person name="Morin N."/>
            <person name="Michaux A."/>
            <person name="Benotmane M.A."/>
            <person name="Leys N."/>
            <person name="Vallaeys T."/>
            <person name="Lapidus A."/>
            <person name="Monchy S."/>
            <person name="Medigue C."/>
            <person name="Taghavi S."/>
            <person name="McCorkle S."/>
            <person name="Dunn J."/>
            <person name="van der Lelie D."/>
            <person name="Mergeay M."/>
        </authorList>
    </citation>
    <scope>NUCLEOTIDE SEQUENCE [LARGE SCALE GENOMIC DNA]</scope>
    <source>
        <strain>ATCC 43123 / DSM 2839 / NBRC 102507 / CH34</strain>
    </source>
</reference>
<feature type="chain" id="PRO_0000341160" description="D-alanine--D-alanine ligase">
    <location>
        <begin position="1"/>
        <end position="327"/>
    </location>
</feature>
<feature type="domain" description="ATP-grasp" evidence="2">
    <location>
        <begin position="113"/>
        <end position="312"/>
    </location>
</feature>
<feature type="binding site" evidence="2">
    <location>
        <begin position="139"/>
        <end position="194"/>
    </location>
    <ligand>
        <name>ATP</name>
        <dbReference type="ChEBI" id="CHEBI:30616"/>
    </ligand>
</feature>
<feature type="binding site" evidence="2">
    <location>
        <position position="266"/>
    </location>
    <ligand>
        <name>Mg(2+)</name>
        <dbReference type="ChEBI" id="CHEBI:18420"/>
        <label>1</label>
    </ligand>
</feature>
<feature type="binding site" evidence="2">
    <location>
        <position position="279"/>
    </location>
    <ligand>
        <name>Mg(2+)</name>
        <dbReference type="ChEBI" id="CHEBI:18420"/>
        <label>1</label>
    </ligand>
</feature>
<feature type="binding site" evidence="2">
    <location>
        <position position="279"/>
    </location>
    <ligand>
        <name>Mg(2+)</name>
        <dbReference type="ChEBI" id="CHEBI:18420"/>
        <label>2</label>
    </ligand>
</feature>
<feature type="binding site" evidence="2">
    <location>
        <position position="281"/>
    </location>
    <ligand>
        <name>Mg(2+)</name>
        <dbReference type="ChEBI" id="CHEBI:18420"/>
        <label>2</label>
    </ligand>
</feature>
<organism>
    <name type="scientific">Cupriavidus metallidurans (strain ATCC 43123 / DSM 2839 / NBRC 102507 / CH34)</name>
    <name type="common">Ralstonia metallidurans</name>
    <dbReference type="NCBI Taxonomy" id="266264"/>
    <lineage>
        <taxon>Bacteria</taxon>
        <taxon>Pseudomonadati</taxon>
        <taxon>Pseudomonadota</taxon>
        <taxon>Betaproteobacteria</taxon>
        <taxon>Burkholderiales</taxon>
        <taxon>Burkholderiaceae</taxon>
        <taxon>Cupriavidus</taxon>
    </lineage>
</organism>
<sequence length="327" mass="34968">MSFVAHPNIDPKSLGKVGVLLGGKSAEREISLLSGNGVLAALKSRGVDAHPFDPGLQPISELAAAGFDRVFIALHGRYGEDGTMQGLLEQLGIPYTGSGVLASALAMDKQATKRLWMTHGLATPRFAMLYANTDFDAVVADLGLPLIVKPAREGSSIGLTKVIAADQMRAAFEKAAGLDADVIAETFIDGAELTCPIVGEGPTAEALPVIKIVAPESNYDYQNKYFTDDTQYLCPSTLPDALEREVRALAVEAFRVLGCRGWARADVMLTRDGKPYLLEMNTSPGMTGHSLVPMAARANGISYEDFVMQVLAAATLDLHPNEHWKPE</sequence>
<proteinExistence type="inferred from homology"/>
<accession>Q1LIM8</accession>
<comment type="function">
    <text evidence="2">Cell wall formation.</text>
</comment>
<comment type="catalytic activity">
    <reaction evidence="2">
        <text>2 D-alanine + ATP = D-alanyl-D-alanine + ADP + phosphate + H(+)</text>
        <dbReference type="Rhea" id="RHEA:11224"/>
        <dbReference type="ChEBI" id="CHEBI:15378"/>
        <dbReference type="ChEBI" id="CHEBI:30616"/>
        <dbReference type="ChEBI" id="CHEBI:43474"/>
        <dbReference type="ChEBI" id="CHEBI:57416"/>
        <dbReference type="ChEBI" id="CHEBI:57822"/>
        <dbReference type="ChEBI" id="CHEBI:456216"/>
        <dbReference type="EC" id="6.3.2.4"/>
    </reaction>
</comment>
<comment type="cofactor">
    <cofactor evidence="1">
        <name>Mg(2+)</name>
        <dbReference type="ChEBI" id="CHEBI:18420"/>
    </cofactor>
    <cofactor evidence="1">
        <name>Mn(2+)</name>
        <dbReference type="ChEBI" id="CHEBI:29035"/>
    </cofactor>
    <text evidence="1">Binds 2 magnesium or manganese ions per subunit.</text>
</comment>
<comment type="pathway">
    <text evidence="2">Cell wall biogenesis; peptidoglycan biosynthesis.</text>
</comment>
<comment type="subcellular location">
    <subcellularLocation>
        <location evidence="2">Cytoplasm</location>
    </subcellularLocation>
</comment>
<comment type="similarity">
    <text evidence="2">Belongs to the D-alanine--D-alanine ligase family.</text>
</comment>
<protein>
    <recommendedName>
        <fullName evidence="2">D-alanine--D-alanine ligase</fullName>
        <ecNumber evidence="2">6.3.2.4</ecNumber>
    </recommendedName>
    <alternativeName>
        <fullName evidence="2">D-Ala-D-Ala ligase</fullName>
    </alternativeName>
    <alternativeName>
        <fullName evidence="2">D-alanylalanine synthetase</fullName>
    </alternativeName>
</protein>
<gene>
    <name evidence="2" type="primary">ddl</name>
    <name type="ordered locus">Rmet_3126</name>
</gene>
<keyword id="KW-0067">ATP-binding</keyword>
<keyword id="KW-0133">Cell shape</keyword>
<keyword id="KW-0961">Cell wall biogenesis/degradation</keyword>
<keyword id="KW-0963">Cytoplasm</keyword>
<keyword id="KW-0436">Ligase</keyword>
<keyword id="KW-0460">Magnesium</keyword>
<keyword id="KW-0464">Manganese</keyword>
<keyword id="KW-0479">Metal-binding</keyword>
<keyword id="KW-0547">Nucleotide-binding</keyword>
<keyword id="KW-0573">Peptidoglycan synthesis</keyword>
<keyword id="KW-1185">Reference proteome</keyword>